<sequence length="564" mass="62182">MTEHHNSDPRLDTTREIRAPHGTTLRAKSWLTEAPLRMLMNNLDPDVAEHPHALVVYGGIGRAARDWKCYDKIVEVLERLEDDQTLLVQSGKPVGVFPTHKNAPRVLIANSNLVPHWANWEHFNELDKEGLMMYGQMTAGSWIYIGSQGIVQGTYETFVAIAKKHFQGEANGKWVLTGGLGGMGGAQPLAATMAGFSMIAVECDESRIDYRLRTGYVDRKATSIDEAMAMIKESDTPISVGLLGNAADVFPELVERNITPDVVTDQTSAHDPLNGYLPQGWTMEKAAQERTIDEAKVVKAAKQSMAIQVQAMLDLQYRGAATVDYGNNIRQMALEEGVENAFDFPGFVPAYIRPLFCEGVGPFRWAALSGDPEDIYKTDQKVKELIPDNPHLHNWLDMARERIQFQGLPARICWVGLKDRERLGQAFNEMVKNGELKAPVVIGRDHLDSGSVASPNRETEGMMDGSDAVSDWPLLNALLNTAGGATWVSLHHGGGVGMGFSQHSGMVICCDGSEDASQRISRVLHNDPATGVMRHADAGYDIAKQCAKEQKLDLPMLNEELRRL</sequence>
<name>HUTU_VIBA3</name>
<comment type="function">
    <text evidence="1">Catalyzes the conversion of urocanate to 4-imidazolone-5-propionate.</text>
</comment>
<comment type="catalytic activity">
    <reaction evidence="1">
        <text>4-imidazolone-5-propanoate = trans-urocanate + H2O</text>
        <dbReference type="Rhea" id="RHEA:13101"/>
        <dbReference type="ChEBI" id="CHEBI:15377"/>
        <dbReference type="ChEBI" id="CHEBI:17771"/>
        <dbReference type="ChEBI" id="CHEBI:77893"/>
        <dbReference type="EC" id="4.2.1.49"/>
    </reaction>
</comment>
<comment type="cofactor">
    <cofactor evidence="1">
        <name>NAD(+)</name>
        <dbReference type="ChEBI" id="CHEBI:57540"/>
    </cofactor>
    <text evidence="1">Binds 1 NAD(+) per subunit.</text>
</comment>
<comment type="pathway">
    <text evidence="1">Amino-acid degradation; L-histidine degradation into L-glutamate; N-formimidoyl-L-glutamate from L-histidine: step 2/3.</text>
</comment>
<comment type="subcellular location">
    <subcellularLocation>
        <location evidence="1">Cytoplasm</location>
    </subcellularLocation>
</comment>
<comment type="similarity">
    <text evidence="1">Belongs to the urocanase family.</text>
</comment>
<protein>
    <recommendedName>
        <fullName evidence="1">Urocanate hydratase</fullName>
        <shortName evidence="1">Urocanase</shortName>
        <ecNumber evidence="1">4.2.1.49</ecNumber>
    </recommendedName>
    <alternativeName>
        <fullName evidence="1">Imidazolonepropionate hydrolase</fullName>
    </alternativeName>
</protein>
<keyword id="KW-0963">Cytoplasm</keyword>
<keyword id="KW-0369">Histidine metabolism</keyword>
<keyword id="KW-0456">Lyase</keyword>
<keyword id="KW-0520">NAD</keyword>
<organism>
    <name type="scientific">Vibrio atlanticus (strain LGP32)</name>
    <name type="common">Vibrio splendidus (strain Mel32)</name>
    <dbReference type="NCBI Taxonomy" id="575788"/>
    <lineage>
        <taxon>Bacteria</taxon>
        <taxon>Pseudomonadati</taxon>
        <taxon>Pseudomonadota</taxon>
        <taxon>Gammaproteobacteria</taxon>
        <taxon>Vibrionales</taxon>
        <taxon>Vibrionaceae</taxon>
        <taxon>Vibrio</taxon>
    </lineage>
</organism>
<gene>
    <name evidence="1" type="primary">hutU</name>
    <name type="ordered locus">VS_1217</name>
</gene>
<accession>B7VMU2</accession>
<reference key="1">
    <citation type="submission" date="2009-02" db="EMBL/GenBank/DDBJ databases">
        <title>Vibrio splendidus str. LGP32 complete genome.</title>
        <authorList>
            <person name="Mazel D."/>
            <person name="Le Roux F."/>
        </authorList>
    </citation>
    <scope>NUCLEOTIDE SEQUENCE [LARGE SCALE GENOMIC DNA]</scope>
    <source>
        <strain>LGP32</strain>
    </source>
</reference>
<dbReference type="EC" id="4.2.1.49" evidence="1"/>
<dbReference type="EMBL" id="FM954972">
    <property type="protein sequence ID" value="CAV18343.1"/>
    <property type="molecule type" value="Genomic_DNA"/>
</dbReference>
<dbReference type="SMR" id="B7VMU2"/>
<dbReference type="STRING" id="575788.VS_1217"/>
<dbReference type="KEGG" id="vsp:VS_1217"/>
<dbReference type="PATRIC" id="fig|575788.5.peg.2536"/>
<dbReference type="eggNOG" id="COG2987">
    <property type="taxonomic scope" value="Bacteria"/>
</dbReference>
<dbReference type="HOGENOM" id="CLU_018868_0_1_6"/>
<dbReference type="UniPathway" id="UPA00379">
    <property type="reaction ID" value="UER00550"/>
</dbReference>
<dbReference type="Proteomes" id="UP000009100">
    <property type="component" value="Chromosome 1"/>
</dbReference>
<dbReference type="GO" id="GO:0005737">
    <property type="term" value="C:cytoplasm"/>
    <property type="evidence" value="ECO:0007669"/>
    <property type="project" value="UniProtKB-SubCell"/>
</dbReference>
<dbReference type="GO" id="GO:0016153">
    <property type="term" value="F:urocanate hydratase activity"/>
    <property type="evidence" value="ECO:0007669"/>
    <property type="project" value="UniProtKB-UniRule"/>
</dbReference>
<dbReference type="GO" id="GO:0019556">
    <property type="term" value="P:L-histidine catabolic process to glutamate and formamide"/>
    <property type="evidence" value="ECO:0007669"/>
    <property type="project" value="UniProtKB-UniPathway"/>
</dbReference>
<dbReference type="GO" id="GO:0019557">
    <property type="term" value="P:L-histidine catabolic process to glutamate and formate"/>
    <property type="evidence" value="ECO:0007669"/>
    <property type="project" value="UniProtKB-UniPathway"/>
</dbReference>
<dbReference type="FunFam" id="3.40.50.10730:FF:000001">
    <property type="entry name" value="Urocanate hydratase"/>
    <property type="match status" value="1"/>
</dbReference>
<dbReference type="Gene3D" id="3.40.50.10730">
    <property type="entry name" value="Urocanase like domains"/>
    <property type="match status" value="1"/>
</dbReference>
<dbReference type="Gene3D" id="3.40.1770.10">
    <property type="entry name" value="Urocanase superfamily"/>
    <property type="match status" value="1"/>
</dbReference>
<dbReference type="HAMAP" id="MF_00577">
    <property type="entry name" value="HutU"/>
    <property type="match status" value="1"/>
</dbReference>
<dbReference type="InterPro" id="IPR055351">
    <property type="entry name" value="Urocanase"/>
</dbReference>
<dbReference type="InterPro" id="IPR023637">
    <property type="entry name" value="Urocanase-like"/>
</dbReference>
<dbReference type="InterPro" id="IPR035401">
    <property type="entry name" value="Urocanase_C"/>
</dbReference>
<dbReference type="InterPro" id="IPR038364">
    <property type="entry name" value="Urocanase_central_sf"/>
</dbReference>
<dbReference type="InterPro" id="IPR023636">
    <property type="entry name" value="Urocanase_CS"/>
</dbReference>
<dbReference type="InterPro" id="IPR035400">
    <property type="entry name" value="Urocanase_N"/>
</dbReference>
<dbReference type="InterPro" id="IPR035085">
    <property type="entry name" value="Urocanase_Rossmann-like"/>
</dbReference>
<dbReference type="InterPro" id="IPR036190">
    <property type="entry name" value="Urocanase_sf"/>
</dbReference>
<dbReference type="NCBIfam" id="TIGR01228">
    <property type="entry name" value="hutU"/>
    <property type="match status" value="1"/>
</dbReference>
<dbReference type="NCBIfam" id="NF003820">
    <property type="entry name" value="PRK05414.1"/>
    <property type="match status" value="1"/>
</dbReference>
<dbReference type="PANTHER" id="PTHR12216">
    <property type="entry name" value="UROCANATE HYDRATASE"/>
    <property type="match status" value="1"/>
</dbReference>
<dbReference type="PANTHER" id="PTHR12216:SF4">
    <property type="entry name" value="UROCANATE HYDRATASE"/>
    <property type="match status" value="1"/>
</dbReference>
<dbReference type="Pfam" id="PF01175">
    <property type="entry name" value="Urocanase"/>
    <property type="match status" value="1"/>
</dbReference>
<dbReference type="Pfam" id="PF17392">
    <property type="entry name" value="Urocanase_C"/>
    <property type="match status" value="1"/>
</dbReference>
<dbReference type="Pfam" id="PF17391">
    <property type="entry name" value="Urocanase_N"/>
    <property type="match status" value="1"/>
</dbReference>
<dbReference type="PIRSF" id="PIRSF001423">
    <property type="entry name" value="Urocanate_hydrat"/>
    <property type="match status" value="1"/>
</dbReference>
<dbReference type="SUPFAM" id="SSF111326">
    <property type="entry name" value="Urocanase"/>
    <property type="match status" value="1"/>
</dbReference>
<dbReference type="PROSITE" id="PS01233">
    <property type="entry name" value="UROCANASE"/>
    <property type="match status" value="1"/>
</dbReference>
<evidence type="ECO:0000255" key="1">
    <source>
        <dbReference type="HAMAP-Rule" id="MF_00577"/>
    </source>
</evidence>
<feature type="chain" id="PRO_1000199905" description="Urocanate hydratase">
    <location>
        <begin position="1"/>
        <end position="564"/>
    </location>
</feature>
<feature type="active site" evidence="1">
    <location>
        <position position="413"/>
    </location>
</feature>
<feature type="binding site" evidence="1">
    <location>
        <begin position="58"/>
        <end position="59"/>
    </location>
    <ligand>
        <name>NAD(+)</name>
        <dbReference type="ChEBI" id="CHEBI:57540"/>
    </ligand>
</feature>
<feature type="binding site" evidence="1">
    <location>
        <position position="136"/>
    </location>
    <ligand>
        <name>NAD(+)</name>
        <dbReference type="ChEBI" id="CHEBI:57540"/>
    </ligand>
</feature>
<feature type="binding site" evidence="1">
    <location>
        <begin position="182"/>
        <end position="184"/>
    </location>
    <ligand>
        <name>NAD(+)</name>
        <dbReference type="ChEBI" id="CHEBI:57540"/>
    </ligand>
</feature>
<feature type="binding site" evidence="1">
    <location>
        <position position="202"/>
    </location>
    <ligand>
        <name>NAD(+)</name>
        <dbReference type="ChEBI" id="CHEBI:57540"/>
    </ligand>
</feature>
<feature type="binding site" evidence="1">
    <location>
        <position position="207"/>
    </location>
    <ligand>
        <name>NAD(+)</name>
        <dbReference type="ChEBI" id="CHEBI:57540"/>
    </ligand>
</feature>
<feature type="binding site" evidence="1">
    <location>
        <begin position="245"/>
        <end position="246"/>
    </location>
    <ligand>
        <name>NAD(+)</name>
        <dbReference type="ChEBI" id="CHEBI:57540"/>
    </ligand>
</feature>
<feature type="binding site" evidence="1">
    <location>
        <begin position="266"/>
        <end position="270"/>
    </location>
    <ligand>
        <name>NAD(+)</name>
        <dbReference type="ChEBI" id="CHEBI:57540"/>
    </ligand>
</feature>
<feature type="binding site" evidence="1">
    <location>
        <begin position="276"/>
        <end position="277"/>
    </location>
    <ligand>
        <name>NAD(+)</name>
        <dbReference type="ChEBI" id="CHEBI:57540"/>
    </ligand>
</feature>
<feature type="binding site" evidence="1">
    <location>
        <position position="325"/>
    </location>
    <ligand>
        <name>NAD(+)</name>
        <dbReference type="ChEBI" id="CHEBI:57540"/>
    </ligand>
</feature>
<feature type="binding site" evidence="1">
    <location>
        <position position="495"/>
    </location>
    <ligand>
        <name>NAD(+)</name>
        <dbReference type="ChEBI" id="CHEBI:57540"/>
    </ligand>
</feature>
<proteinExistence type="inferred from homology"/>